<feature type="chain" id="PRO_1000136218" description="Protein PsiE">
    <location>
        <begin position="1"/>
        <end position="136"/>
    </location>
</feature>
<feature type="transmembrane region" description="Helical" evidence="1">
    <location>
        <begin position="15"/>
        <end position="35"/>
    </location>
</feature>
<feature type="transmembrane region" description="Helical" evidence="1">
    <location>
        <begin position="55"/>
        <end position="75"/>
    </location>
</feature>
<feature type="transmembrane region" description="Helical" evidence="1">
    <location>
        <begin position="83"/>
        <end position="103"/>
    </location>
</feature>
<feature type="transmembrane region" description="Helical" evidence="1">
    <location>
        <begin position="108"/>
        <end position="128"/>
    </location>
</feature>
<accession>B5FQQ0</accession>
<organism>
    <name type="scientific">Salmonella dublin (strain CT_02021853)</name>
    <dbReference type="NCBI Taxonomy" id="439851"/>
    <lineage>
        <taxon>Bacteria</taxon>
        <taxon>Pseudomonadati</taxon>
        <taxon>Pseudomonadota</taxon>
        <taxon>Gammaproteobacteria</taxon>
        <taxon>Enterobacterales</taxon>
        <taxon>Enterobacteriaceae</taxon>
        <taxon>Salmonella</taxon>
    </lineage>
</organism>
<reference key="1">
    <citation type="journal article" date="2011" name="J. Bacteriol.">
        <title>Comparative genomics of 28 Salmonella enterica isolates: evidence for CRISPR-mediated adaptive sublineage evolution.</title>
        <authorList>
            <person name="Fricke W.F."/>
            <person name="Mammel M.K."/>
            <person name="McDermott P.F."/>
            <person name="Tartera C."/>
            <person name="White D.G."/>
            <person name="Leclerc J.E."/>
            <person name="Ravel J."/>
            <person name="Cebula T.A."/>
        </authorList>
    </citation>
    <scope>NUCLEOTIDE SEQUENCE [LARGE SCALE GENOMIC DNA]</scope>
    <source>
        <strain>CT_02021853</strain>
    </source>
</reference>
<evidence type="ECO:0000255" key="1">
    <source>
        <dbReference type="HAMAP-Rule" id="MF_01048"/>
    </source>
</evidence>
<gene>
    <name evidence="1" type="primary">psiE</name>
    <name type="ordered locus">SeD_A4620</name>
</gene>
<dbReference type="EMBL" id="CP001144">
    <property type="protein sequence ID" value="ACH76417.1"/>
    <property type="molecule type" value="Genomic_DNA"/>
</dbReference>
<dbReference type="RefSeq" id="WP_000982749.1">
    <property type="nucleotide sequence ID" value="NC_011205.1"/>
</dbReference>
<dbReference type="SMR" id="B5FQQ0"/>
<dbReference type="KEGG" id="sed:SeD_A4620"/>
<dbReference type="HOGENOM" id="CLU_127561_0_1_6"/>
<dbReference type="Proteomes" id="UP000008322">
    <property type="component" value="Chromosome"/>
</dbReference>
<dbReference type="GO" id="GO:0005886">
    <property type="term" value="C:plasma membrane"/>
    <property type="evidence" value="ECO:0007669"/>
    <property type="project" value="UniProtKB-SubCell"/>
</dbReference>
<dbReference type="GO" id="GO:0016036">
    <property type="term" value="P:cellular response to phosphate starvation"/>
    <property type="evidence" value="ECO:0007669"/>
    <property type="project" value="InterPro"/>
</dbReference>
<dbReference type="HAMAP" id="MF_01048">
    <property type="entry name" value="PsiE"/>
    <property type="match status" value="1"/>
</dbReference>
<dbReference type="InterPro" id="IPR009315">
    <property type="entry name" value="P_starv_induced_PsiE"/>
</dbReference>
<dbReference type="InterPro" id="IPR020948">
    <property type="entry name" value="P_starv_induced_PsiE-like"/>
</dbReference>
<dbReference type="NCBIfam" id="NF002764">
    <property type="entry name" value="PRK02833.1-2"/>
    <property type="match status" value="1"/>
</dbReference>
<dbReference type="NCBIfam" id="NF002765">
    <property type="entry name" value="PRK02833.1-3"/>
    <property type="match status" value="1"/>
</dbReference>
<dbReference type="NCBIfam" id="NF002767">
    <property type="entry name" value="PRK02833.1-5"/>
    <property type="match status" value="1"/>
</dbReference>
<dbReference type="PANTHER" id="PTHR37819">
    <property type="entry name" value="PROTEIN PSIE"/>
    <property type="match status" value="1"/>
</dbReference>
<dbReference type="PANTHER" id="PTHR37819:SF1">
    <property type="entry name" value="PROTEIN PSIE"/>
    <property type="match status" value="1"/>
</dbReference>
<dbReference type="Pfam" id="PF06146">
    <property type="entry name" value="PsiE"/>
    <property type="match status" value="1"/>
</dbReference>
<dbReference type="PIRSF" id="PIRSF029598">
    <property type="entry name" value="PsiE"/>
    <property type="match status" value="1"/>
</dbReference>
<protein>
    <recommendedName>
        <fullName evidence="1">Protein PsiE</fullName>
    </recommendedName>
</protein>
<proteinExistence type="inferred from homology"/>
<keyword id="KW-0997">Cell inner membrane</keyword>
<keyword id="KW-1003">Cell membrane</keyword>
<keyword id="KW-0472">Membrane</keyword>
<keyword id="KW-0812">Transmembrane</keyword>
<keyword id="KW-1133">Transmembrane helix</keyword>
<comment type="subcellular location">
    <subcellularLocation>
        <location evidence="1">Cell inner membrane</location>
        <topology evidence="1">Multi-pass membrane protein</topology>
    </subcellularLocation>
</comment>
<comment type="similarity">
    <text evidence="1">Belongs to the PsiE family.</text>
</comment>
<sequence>MMPLSRSRLEFIATILQNVLNLGLLTLGLILVVFLGKETVHLADALFAPEQASKYELVEGLVIYFLYFEFIALIVKYFKSGLHFPLRYFVYIGITAIVRLIIVDHKTPMDVLLYSAAILLLVITLWLCNSNRLRRE</sequence>
<name>PSIE_SALDC</name>